<evidence type="ECO:0000250" key="1">
    <source>
        <dbReference type="UniProtKB" id="O35568"/>
    </source>
</evidence>
<evidence type="ECO:0000255" key="2"/>
<evidence type="ECO:0000255" key="3">
    <source>
        <dbReference type="PROSITE-ProRule" id="PRU00076"/>
    </source>
</evidence>
<evidence type="ECO:0000269" key="4">
    <source>
    </source>
</evidence>
<evidence type="ECO:0000269" key="5">
    <source>
    </source>
</evidence>
<evidence type="ECO:0000269" key="6">
    <source>
    </source>
</evidence>
<evidence type="ECO:0000269" key="7">
    <source>
    </source>
</evidence>
<evidence type="ECO:0000269" key="8">
    <source>
    </source>
</evidence>
<evidence type="ECO:0000269" key="9">
    <source>
    </source>
</evidence>
<evidence type="ECO:0000269" key="10">
    <source>
    </source>
</evidence>
<evidence type="ECO:0000269" key="11">
    <source>
    </source>
</evidence>
<evidence type="ECO:0000269" key="12">
    <source>
    </source>
</evidence>
<evidence type="ECO:0000269" key="13">
    <source>
    </source>
</evidence>
<evidence type="ECO:0000269" key="14">
    <source>
    </source>
</evidence>
<evidence type="ECO:0000269" key="15">
    <source>
    </source>
</evidence>
<evidence type="ECO:0000269" key="16">
    <source>
    </source>
</evidence>
<evidence type="ECO:0000269" key="17">
    <source>
    </source>
</evidence>
<evidence type="ECO:0000269" key="18">
    <source>
    </source>
</evidence>
<evidence type="ECO:0000303" key="19">
    <source>
    </source>
</evidence>
<evidence type="ECO:0000305" key="20"/>
<keyword id="KW-0025">Alternative splicing</keyword>
<keyword id="KW-0106">Calcium</keyword>
<keyword id="KW-0225">Disease variant</keyword>
<keyword id="KW-1015">Disulfide bond</keyword>
<keyword id="KW-0245">EGF-like domain</keyword>
<keyword id="KW-0272">Extracellular matrix</keyword>
<keyword id="KW-0955">Glaucoma</keyword>
<keyword id="KW-0325">Glycoprotein</keyword>
<keyword id="KW-0339">Growth factor</keyword>
<keyword id="KW-1267">Proteomics identification</keyword>
<keyword id="KW-1185">Reference proteome</keyword>
<keyword id="KW-0677">Repeat</keyword>
<keyword id="KW-0964">Secreted</keyword>
<keyword id="KW-0732">Signal</keyword>
<protein>
    <recommendedName>
        <fullName>EGF-containing fibulin-like extracellular matrix protein 1</fullName>
    </recommendedName>
    <alternativeName>
        <fullName>Extracellular protein S1-5</fullName>
    </alternativeName>
    <alternativeName>
        <fullName>Fibrillin-like protein</fullName>
    </alternativeName>
    <alternativeName>
        <fullName>Fibulin-3</fullName>
        <shortName>FIBL-3</shortName>
    </alternativeName>
</protein>
<comment type="function">
    <text evidence="10 11 12">Binds EGFR, the EGF receptor, inducing EGFR autophosphorylation and the activation of downstream signaling pathways. May play a role in cell adhesion and migration. May function as a negative regulator of chondrocyte differentiation. In the olfactory epithelium, it may regulate glial cell migration, differentiation and the ability of glial cells to support neuronal neurite outgrowth.</text>
</comment>
<comment type="subunit">
    <text evidence="7 9">Interacts with ECM1. Interacts with TIMP3.</text>
</comment>
<comment type="interaction">
    <interactant intactId="EBI-536772">
        <id>Q12805</id>
    </interactant>
    <interactant intactId="EBI-12224467">
        <id>Q9NYG5-2</id>
        <label>ANAPC11</label>
    </interactant>
    <organismsDiffer>false</organismsDiffer>
    <experiments>3</experiments>
</comment>
<comment type="interaction">
    <interactant intactId="EBI-536772">
        <id>Q12805</id>
    </interactant>
    <interactant intactId="EBI-365961">
        <id>P10398</id>
        <label>ARAF</label>
    </interactant>
    <organismsDiffer>false</organismsDiffer>
    <experiments>3</experiments>
</comment>
<comment type="interaction">
    <interactant intactId="EBI-536772">
        <id>Q12805</id>
    </interactant>
    <interactant intactId="EBI-945980">
        <id>P54259</id>
        <label>ATN1</label>
    </interactant>
    <organismsDiffer>false</organismsDiffer>
    <experiments>3</experiments>
</comment>
<comment type="interaction">
    <interactant intactId="EBI-536772">
        <id>Q12805</id>
    </interactant>
    <interactant intactId="EBI-2949658">
        <id>O95429</id>
        <label>BAG4</label>
    </interactant>
    <organismsDiffer>false</organismsDiffer>
    <experiments>3</experiments>
</comment>
<comment type="interaction">
    <interactant intactId="EBI-536772">
        <id>Q12805</id>
    </interactant>
    <interactant intactId="EBI-356517">
        <id>Q9UL15</id>
        <label>BAG5</label>
    </interactant>
    <organismsDiffer>false</organismsDiffer>
    <experiments>3</experiments>
</comment>
<comment type="interaction">
    <interactant intactId="EBI-536772">
        <id>Q12805</id>
    </interactant>
    <interactant intactId="EBI-347552">
        <id>P46379</id>
        <label>BAG6</label>
    </interactant>
    <organismsDiffer>false</organismsDiffer>
    <experiments>4</experiments>
</comment>
<comment type="interaction">
    <interactant intactId="EBI-536772">
        <id>Q12805</id>
    </interactant>
    <interactant intactId="EBI-1056029">
        <id>Q16740</id>
        <label>CLPP</label>
    </interactant>
    <organismsDiffer>false</organismsDiffer>
    <experiments>3</experiments>
</comment>
<comment type="interaction">
    <interactant intactId="EBI-536772">
        <id>Q12805</id>
    </interactant>
    <interactant intactId="EBI-7519711">
        <id>P53673</id>
        <label>CRYBA4</label>
    </interactant>
    <organismsDiffer>false</organismsDiffer>
    <experiments>3</experiments>
</comment>
<comment type="interaction">
    <interactant intactId="EBI-536772">
        <id>Q12805</id>
    </interactant>
    <interactant intactId="EBI-3867333">
        <id>A8MQ03</id>
        <label>CYSRT1</label>
    </interactant>
    <organismsDiffer>false</organismsDiffer>
    <experiments>5</experiments>
</comment>
<comment type="interaction">
    <interactant intactId="EBI-536772">
        <id>Q12805</id>
    </interactant>
    <interactant intactId="EBI-1752811">
        <id>Q9BQ89</id>
        <label>FAM110A</label>
    </interactant>
    <organismsDiffer>false</organismsDiffer>
    <experiments>3</experiments>
</comment>
<comment type="interaction">
    <interactant intactId="EBI-536772">
        <id>Q12805</id>
    </interactant>
    <interactant intactId="EBI-740785">
        <id>P49639</id>
        <label>HOXA1</label>
    </interactant>
    <organismsDiffer>false</organismsDiffer>
    <experiments>4</experiments>
</comment>
<comment type="interaction">
    <interactant intactId="EBI-536772">
        <id>Q12805</id>
    </interactant>
    <interactant intactId="EBI-3918847">
        <id>Q9H2F3</id>
        <label>HSD3B7</label>
    </interactant>
    <organismsDiffer>false</organismsDiffer>
    <experiments>3</experiments>
</comment>
<comment type="interaction">
    <interactant intactId="EBI-536772">
        <id>Q12805</id>
    </interactant>
    <interactant intactId="EBI-466029">
        <id>P42858</id>
        <label>HTT</label>
    </interactant>
    <organismsDiffer>false</organismsDiffer>
    <experiments>3</experiments>
</comment>
<comment type="interaction">
    <interactant intactId="EBI-536772">
        <id>Q12805</id>
    </interactant>
    <interactant intactId="EBI-947015">
        <id>P24592</id>
        <label>IGFBP6</label>
    </interactant>
    <organismsDiffer>false</organismsDiffer>
    <experiments>3</experiments>
</comment>
<comment type="interaction">
    <interactant intactId="EBI-536772">
        <id>Q12805</id>
    </interactant>
    <interactant intactId="EBI-12196745">
        <id>Q3LHN2</id>
        <label>KRTAP19-2</label>
    </interactant>
    <organismsDiffer>false</organismsDiffer>
    <experiments>3</experiments>
</comment>
<comment type="interaction">
    <interactant intactId="EBI-536772">
        <id>Q12805</id>
    </interactant>
    <interactant intactId="EBI-18395721">
        <id>Q3LI59</id>
        <label>KRTAP21-2</label>
    </interactant>
    <organismsDiffer>false</organismsDiffer>
    <experiments>3</experiments>
</comment>
<comment type="interaction">
    <interactant intactId="EBI-536772">
        <id>Q12805</id>
    </interactant>
    <interactant intactId="EBI-12111050">
        <id>Q3LI64</id>
        <label>KRTAP6-1</label>
    </interactant>
    <organismsDiffer>false</organismsDiffer>
    <experiments>3</experiments>
</comment>
<comment type="interaction">
    <interactant intactId="EBI-536772">
        <id>Q12805</id>
    </interactant>
    <interactant intactId="EBI-12224199">
        <id>Q5T751</id>
        <label>LCE1C</label>
    </interactant>
    <organismsDiffer>false</organismsDiffer>
    <experiments>3</experiments>
</comment>
<comment type="interaction">
    <interactant intactId="EBI-536772">
        <id>Q12805</id>
    </interactant>
    <interactant intactId="EBI-11973993">
        <id>Q5TA81</id>
        <label>LCE2C</label>
    </interactant>
    <organismsDiffer>false</organismsDiffer>
    <experiments>3</experiments>
</comment>
<comment type="interaction">
    <interactant intactId="EBI-536772">
        <id>Q12805</id>
    </interactant>
    <interactant intactId="EBI-9394625">
        <id>Q5TA76</id>
        <label>LCE3A</label>
    </interactant>
    <organismsDiffer>false</organismsDiffer>
    <experiments>3</experiments>
</comment>
<comment type="interaction">
    <interactant intactId="EBI-536772">
        <id>Q12805</id>
    </interactant>
    <interactant intactId="EBI-6658837">
        <id>Q9BYE3</id>
        <label>LCE3D</label>
    </interactant>
    <organismsDiffer>false</organismsDiffer>
    <experiments>3</experiments>
</comment>
<comment type="interaction">
    <interactant intactId="EBI-536772">
        <id>Q12805</id>
    </interactant>
    <interactant intactId="EBI-748397">
        <id>P50222</id>
        <label>MEOX2</label>
    </interactant>
    <organismsDiffer>false</organismsDiffer>
    <experiments>3</experiments>
</comment>
<comment type="interaction">
    <interactant intactId="EBI-536772">
        <id>Q12805</id>
    </interactant>
    <interactant intactId="EBI-16439278">
        <id>Q6FHY5</id>
        <label>MEOX2</label>
    </interactant>
    <organismsDiffer>false</organismsDiffer>
    <experiments>6</experiments>
</comment>
<comment type="interaction">
    <interactant intactId="EBI-536772">
        <id>Q12805</id>
    </interactant>
    <interactant intactId="EBI-2340269">
        <id>Q13064</id>
        <label>MKRN3</label>
    </interactant>
    <organismsDiffer>false</organismsDiffer>
    <experiments>3</experiments>
</comment>
<comment type="interaction">
    <interactant intactId="EBI-536772">
        <id>Q12805</id>
    </interactant>
    <interactant intactId="EBI-10699187">
        <id>Q8IXL7-2</id>
        <label>MSRB3</label>
    </interactant>
    <organismsDiffer>false</organismsDiffer>
    <experiments>3</experiments>
</comment>
<comment type="interaction">
    <interactant intactId="EBI-536772">
        <id>Q12805</id>
    </interactant>
    <interactant intactId="EBI-13644623">
        <id>Q92570</id>
        <label>NR4A3</label>
    </interactant>
    <organismsDiffer>false</organismsDiffer>
    <experiments>3</experiments>
</comment>
<comment type="interaction">
    <interactant intactId="EBI-536772">
        <id>Q12805</id>
    </interactant>
    <interactant intactId="EBI-740446">
        <id>P32242</id>
        <label>OTX1</label>
    </interactant>
    <organismsDiffer>false</organismsDiffer>
    <experiments>3</experiments>
</comment>
<comment type="interaction">
    <interactant intactId="EBI-536772">
        <id>Q12805</id>
    </interactant>
    <interactant intactId="EBI-9091816">
        <id>Q9NPQ8-4</id>
        <label>RIC8A</label>
    </interactant>
    <organismsDiffer>false</organismsDiffer>
    <experiments>3</experiments>
</comment>
<comment type="interaction">
    <interactant intactId="EBI-536772">
        <id>Q12805</id>
    </interactant>
    <interactant intactId="EBI-347996">
        <id>O43765</id>
        <label>SGTA</label>
    </interactant>
    <organismsDiffer>false</organismsDiffer>
    <experiments>14</experiments>
</comment>
<comment type="interaction">
    <interactant intactId="EBI-536772">
        <id>Q12805</id>
    </interactant>
    <interactant intactId="EBI-355293">
        <id>P03973</id>
        <label>SLPI</label>
    </interactant>
    <organismsDiffer>false</organismsDiffer>
    <experiments>3</experiments>
</comment>
<comment type="interaction">
    <interactant intactId="EBI-536772">
        <id>Q12805</id>
    </interactant>
    <interactant intactId="EBI-355744">
        <id>Q12933</id>
        <label>TRAF2</label>
    </interactant>
    <organismsDiffer>false</organismsDiffer>
    <experiments>12</experiments>
</comment>
<comment type="interaction">
    <interactant intactId="EBI-536772">
        <id>Q12805</id>
    </interactant>
    <interactant intactId="EBI-2825190">
        <id>Q86UY0</id>
        <label>TXNDC5</label>
    </interactant>
    <organismsDiffer>false</organismsDiffer>
    <experiments>3</experiments>
</comment>
<comment type="interaction">
    <interactant intactId="EBI-536772">
        <id>Q12805</id>
    </interactant>
    <interactant intactId="EBI-947187">
        <id>Q9UHD9</id>
        <label>UBQLN2</label>
    </interactant>
    <organismsDiffer>false</organismsDiffer>
    <experiments>3</experiments>
</comment>
<comment type="interaction">
    <interactant intactId="EBI-536772">
        <id>Q12805</id>
    </interactant>
    <interactant intactId="EBI-6863748">
        <id>PRO_0000037551</id>
        <dbReference type="UniProtKB" id="Q9WMX2"/>
    </interactant>
    <organismsDiffer>true</organismsDiffer>
    <experiments>2</experiments>
</comment>
<comment type="subcellular location">
    <subcellularLocation>
        <location evidence="18">Secreted</location>
        <location evidence="18">Extracellular space</location>
        <location evidence="18">Extracellular matrix</location>
    </subcellularLocation>
    <text evidence="1">Localizes to the lamina propria underneath the olfactory epithelium.</text>
</comment>
<comment type="alternative products">
    <event type="alternative splicing"/>
    <isoform>
        <id>Q12805-1</id>
        <name>1</name>
        <sequence type="displayed"/>
    </isoform>
    <isoform>
        <id>Q12805-2</id>
        <name>2</name>
        <sequence type="described" ref="VSP_001392"/>
    </isoform>
    <isoform>
        <id>Q12805-3</id>
        <name>3</name>
        <sequence type="described" ref="VSP_001393"/>
    </isoform>
    <isoform>
        <id>Q12805-4</id>
        <name>4</name>
        <sequence type="described" ref="VSP_001394"/>
    </isoform>
    <isoform>
        <id>Q12805-5</id>
        <name>5</name>
        <sequence type="described" ref="VSP_054372 VSP_054373"/>
    </isoform>
    <text>Experimental confirmation may be lacking for some isoforms.</text>
</comment>
<comment type="tissue specificity">
    <text evidence="6 12">In the eye, associated with photoreceptor outer and inner segment regions, the nerve fiber layer, outer nuclear layer and inner and outer plexiform layers of the retina.</text>
</comment>
<comment type="disease" evidence="4 5 6 8 17">
    <disease id="DI-01504">
        <name>Doyne honeycomb retinal dystrophy</name>
        <acronym>DHRD</acronym>
        <description>An autosomal dominant, progressive, ocular disorder characterized by yellow-white deposits known as drusen that accumulate beneath the retinal pigment epithelium. With age, drusen increase in size and number, and eventually cause visual symptoms, including decreased visual acuity, metamorphopsia, photophobia, and paracentral scotoma.</description>
        <dbReference type="MIM" id="126600"/>
    </disease>
    <text>The disease is caused by variants affecting the gene represented in this entry.</text>
</comment>
<comment type="disease" evidence="14 15 16 18">
    <disease id="DI-06874">
        <name>Cutis laxa, autosomal recessive, 1D</name>
        <acronym>ARCL1D</acronym>
        <description>A connective tissue disorder characterized by loose, hyperextensible skin with decreased resilience and elasticity leading to a premature aged appearance. Face, hands, feet, joints, and torso may be differentially affected. The clinical spectrum of autosomal recessive cutis laxa is highly heterogeneous with respect to organ involvement and severity. ARCL1D features include skin laxity, thin and translucent skin with easy bruising, facial dysmorphism, joint hypermobility, muscle hypotonia, and multiple severe herniations. Skin laxity may progress with age.</description>
        <dbReference type="MIM" id="620780"/>
    </disease>
    <text>The disease is caused by variants affecting the gene represented in this entry.</text>
</comment>
<comment type="disease" evidence="13 17">
    <disease id="DI-06858">
        <name>Glaucoma 1, open angle, H</name>
        <acronym>GLC1H</acronym>
        <description>A form of primary open angle glaucoma (POAG). POAG is characterized by a specific pattern of optic nerve and visual field defects. The angle of the anterior chamber of the eye is open, and usually the intraocular pressure is increased. However, glaucoma can occur at any intraocular pressure. The disease is generally asymptomatic until the late stages, by which time significant and irreversible optic nerve damage has already taken place. GLC1H is an autosomal dominant form manifesting at age between 3 and 40 years, in most patients. Some affected individuals present with glaucoma after age 35 or 40 years.</description>
        <dbReference type="MIM" id="611276"/>
    </disease>
    <text>The disease is caused by variants affecting the gene represented in this entry.</text>
</comment>
<comment type="miscellaneous">
    <text>Up-regulated in malignant gliomas. May increase glioma cell adhesiveness and invasive properties.</text>
</comment>
<comment type="similarity">
    <text evidence="20">Belongs to the fibulin family.</text>
</comment>
<comment type="online information" name="Atlas of Genetics and Cytogenetics in Oncology and Haematology">
    <link uri="https://atlasgeneticsoncology.org/gene/49818/EFEMP1"/>
</comment>
<name>FBLN3_HUMAN</name>
<gene>
    <name type="primary">EFEMP1</name>
    <name type="synonym">FBLN3</name>
    <name type="synonym">FBNL</name>
</gene>
<feature type="signal peptide" evidence="2">
    <location>
        <begin position="1"/>
        <end position="17"/>
    </location>
</feature>
<feature type="chain" id="PRO_0000007570" description="EGF-containing fibulin-like extracellular matrix protein 1">
    <location>
        <begin position="18"/>
        <end position="493"/>
    </location>
</feature>
<feature type="domain" description="EGF-like 1; atypical" evidence="3">
    <location>
        <begin position="26"/>
        <end position="71"/>
    </location>
</feature>
<feature type="domain" description="EGF-like 2; calcium-binding" evidence="3">
    <location>
        <begin position="173"/>
        <end position="213"/>
    </location>
</feature>
<feature type="domain" description="EGF-like 3; calcium-binding" evidence="3">
    <location>
        <begin position="214"/>
        <end position="253"/>
    </location>
</feature>
<feature type="domain" description="EGF-like 4; calcium-binding" evidence="3">
    <location>
        <begin position="254"/>
        <end position="293"/>
    </location>
</feature>
<feature type="domain" description="EGF-like 5; calcium-binding" evidence="3">
    <location>
        <begin position="294"/>
        <end position="333"/>
    </location>
</feature>
<feature type="domain" description="EGF-like 6; calcium-binding" evidence="3">
    <location>
        <begin position="334"/>
        <end position="378"/>
    </location>
</feature>
<feature type="region of interest" description="Mediates interaction with TIMP3" evidence="7">
    <location>
        <begin position="259"/>
        <end position="493"/>
    </location>
</feature>
<feature type="glycosylation site" description="N-linked (GlcNAc...) asparagine" evidence="2">
    <location>
        <position position="249"/>
    </location>
</feature>
<feature type="disulfide bond" evidence="3">
    <location>
        <begin position="177"/>
        <end position="190"/>
    </location>
</feature>
<feature type="disulfide bond" evidence="3">
    <location>
        <begin position="184"/>
        <end position="199"/>
    </location>
</feature>
<feature type="disulfide bond" evidence="3">
    <location>
        <begin position="201"/>
        <end position="212"/>
    </location>
</feature>
<feature type="disulfide bond" evidence="3">
    <location>
        <begin position="218"/>
        <end position="228"/>
    </location>
</feature>
<feature type="disulfide bond" evidence="3">
    <location>
        <begin position="224"/>
        <end position="237"/>
    </location>
</feature>
<feature type="disulfide bond" evidence="3">
    <location>
        <begin position="239"/>
        <end position="252"/>
    </location>
</feature>
<feature type="disulfide bond" evidence="3">
    <location>
        <begin position="258"/>
        <end position="268"/>
    </location>
</feature>
<feature type="disulfide bond" evidence="3">
    <location>
        <begin position="264"/>
        <end position="277"/>
    </location>
</feature>
<feature type="disulfide bond" evidence="3">
    <location>
        <begin position="279"/>
        <end position="292"/>
    </location>
</feature>
<feature type="disulfide bond" evidence="3">
    <location>
        <begin position="298"/>
        <end position="309"/>
    </location>
</feature>
<feature type="disulfide bond" evidence="3">
    <location>
        <begin position="305"/>
        <end position="318"/>
    </location>
</feature>
<feature type="disulfide bond" evidence="3">
    <location>
        <begin position="320"/>
        <end position="332"/>
    </location>
</feature>
<feature type="disulfide bond" evidence="3">
    <location>
        <begin position="338"/>
        <end position="350"/>
    </location>
</feature>
<feature type="disulfide bond" evidence="3">
    <location>
        <begin position="344"/>
        <end position="359"/>
    </location>
</feature>
<feature type="disulfide bond" evidence="3">
    <location>
        <begin position="365"/>
        <end position="377"/>
    </location>
</feature>
<feature type="splice variant" id="VSP_054372" description="In isoform 5." evidence="19">
    <location>
        <begin position="1"/>
        <end position="58"/>
    </location>
</feature>
<feature type="splice variant" id="VSP_001392" description="In isoform 2." evidence="20">
    <location>
        <begin position="1"/>
        <end position="8"/>
    </location>
</feature>
<feature type="splice variant" id="VSP_001393" description="In isoform 3." evidence="20">
    <location>
        <position position="58"/>
    </location>
</feature>
<feature type="splice variant" id="VSP_001394" description="In isoform 4." evidence="20">
    <location>
        <position position="106"/>
    </location>
</feature>
<feature type="splice variant" id="VSP_054373" description="In isoform 5." evidence="19">
    <location>
        <begin position="214"/>
        <end position="293"/>
    </location>
</feature>
<feature type="sequence variant" id="VAR_089427" description="In ARCL1D; likely pathogenic; forms aberrant extracellular disulfide-linked homodimers; loss of function variant unable to rescue extracellular matrix defects when expressed in EFEMP1-deficient cells." evidence="15 18">
    <original>C</original>
    <variation>R</variation>
    <location>
        <position position="55"/>
    </location>
</feature>
<feature type="sequence variant" id="VAR_089428" description="In GLC1H; likely pathogenic; results in increased protein aggregation and intracellular accumulation." evidence="17">
    <original>N</original>
    <variation>Y</variation>
    <location>
        <position position="80"/>
    </location>
</feature>
<feature type="sequence variant" id="VAR_089429" description="In GLC1H; uncertain significance; results in increased protein aggregation and intracellular accumulation." evidence="13 17">
    <original>R</original>
    <variation>W</variation>
    <location>
        <position position="140"/>
    </location>
</feature>
<feature type="sequence variant" id="VAR_089430" description="In ARCL1D; likely pathogenic." evidence="14">
    <location>
        <begin position="205"/>
        <end position="493"/>
    </location>
</feature>
<feature type="sequence variant" id="VAR_009512" description="In dbSNP:rs748965004." evidence="4">
    <original>I</original>
    <variation>F</variation>
    <location>
        <position position="220"/>
    </location>
</feature>
<feature type="sequence variant" id="VAR_009513" description="In DHRD; misfolded, accumulates in cells due to inefficient secretion; induces the formation of deposits between Bruch's membrane and the retinal pigment epithelium where it accumulates; dbSNP:rs121434491." evidence="4 5 6 8 17">
    <original>R</original>
    <variation>W</variation>
    <location>
        <position position="345"/>
    </location>
</feature>
<feature type="sequence variant" id="VAR_089431" description="In ARCL1D; likely pathogenic." evidence="16">
    <location>
        <begin position="401"/>
        <end position="493"/>
    </location>
</feature>
<feature type="sequence variant" id="VAR_089432" description="In GLC1H; uncertain significance; results in increased protein aggregation and intracellular accumulation." evidence="17">
    <original>R</original>
    <variation>C</variation>
    <location>
        <position position="477"/>
    </location>
</feature>
<feature type="mutagenesis site" description="Produces extracellular disulfide-linked homodimers similar as Cys55Arg mutation." evidence="18">
    <original>C</original>
    <variation>A</variation>
    <location>
        <position position="29"/>
    </location>
</feature>
<feature type="mutagenesis site" description="Produces extracellular disulfide-linked homodimers similar as Cys55Arg mutation." evidence="18">
    <original>C</original>
    <variation>A</variation>
    <location>
        <position position="42"/>
    </location>
</feature>
<feature type="mutagenesis site" description="Produces extracellular disulfide-linked homodimers similar as Cys55Arg mutation." evidence="18">
    <original>C</original>
    <variation>A</variation>
    <location>
        <position position="48"/>
    </location>
</feature>
<feature type="mutagenesis site" description="Produces extracellular disulfide-linked homodimers similar as Cys55Arg mutation." evidence="18">
    <original>C</original>
    <variation>A</variation>
    <location>
        <position position="61"/>
    </location>
</feature>
<feature type="mutagenesis site" description="Produces extracellular disulfide-linked homodimers similar as Cys55Arg mutation." evidence="18">
    <original>C</original>
    <variation>A</variation>
    <location>
        <position position="70"/>
    </location>
</feature>
<feature type="mutagenesis site" description="Produces extracellular disulfide-linked homodimers similar as Cys55Arg mutation." evidence="18">
    <original>C</original>
    <variation>A</variation>
    <location>
        <position position="159"/>
    </location>
</feature>
<feature type="mutagenesis site" description="Produces extracellular disulfide-linked homodimers similar as Cys55Arg mutation." evidence="18">
    <original>C</original>
    <variation>A</variation>
    <location>
        <position position="171"/>
    </location>
</feature>
<sequence length="493" mass="54641">MLKALFLTMLTLALVKSQDTEETITYTQCTDGYEWDPVRQQCKDIDECDIVPDACKGGMKCVNHYGGYLCLPKTAQIIVNNEQPQQETQPAEGTSGATTGVVAASSMATSGVLPGGGFVASAAAVAGPEMQTGRNNFVIRRNPADPQRIPSNPSHRIQCAAGYEQSEHNVCQDIDECTAGTHNCRADQVCINLRGSFACQCPPGYQKRGEQCVDIDECTIPPYCHQRCVNTPGSFYCQCSPGFQLAANNYTCVDINECDASNQCAQQCYNILGSFICQCNQGYELSSDRLNCEDIDECRTSSYLCQYQCVNEPGKFSCMCPQGYQVVRSRTCQDINECETTNECREDEMCWNYHGGFRCYPRNPCQDPYILTPENRCVCPVSNAMCRELPQSIVYKYMSIRSDRSVPSDIFQIQATTIYANTINTFRIKSGNENGEFYLRQTSPVSAMLVLVKSLSGPREHIVDLEMLTVSSIGTFRTSSVLRLTIIVGPFSF</sequence>
<organism>
    <name type="scientific">Homo sapiens</name>
    <name type="common">Human</name>
    <dbReference type="NCBI Taxonomy" id="9606"/>
    <lineage>
        <taxon>Eukaryota</taxon>
        <taxon>Metazoa</taxon>
        <taxon>Chordata</taxon>
        <taxon>Craniata</taxon>
        <taxon>Vertebrata</taxon>
        <taxon>Euteleostomi</taxon>
        <taxon>Mammalia</taxon>
        <taxon>Eutheria</taxon>
        <taxon>Euarchontoglires</taxon>
        <taxon>Primates</taxon>
        <taxon>Haplorrhini</taxon>
        <taxon>Catarrhini</taxon>
        <taxon>Hominidae</taxon>
        <taxon>Homo</taxon>
    </lineage>
</organism>
<proteinExistence type="evidence at protein level"/>
<reference key="1">
    <citation type="journal article" date="1995" name="Mol. Cell. Biol.">
        <title>An overexpressed gene transcript in senescent and quiescent human fibroblasts encoding a novel protein in the epidermal growth factor-like repeat family stimulates DNA synthesis.</title>
        <authorList>
            <person name="Lecka-Czernik B."/>
            <person name="Lumpkin C.K. Jr."/>
            <person name="Goldstein S."/>
        </authorList>
    </citation>
    <scope>NUCLEOTIDE SEQUENCE [MRNA]</scope>
    <scope>POSSIBLE ALTERNATIVE SPLICING</scope>
    <source>
        <tissue>Skin</tissue>
    </source>
</reference>
<reference key="2">
    <citation type="journal article" date="1996" name="Genomics">
        <title>Structure and chromosomal assignment of the human S1-5 gene (FBNL) that is highly homologous to fibrillin.</title>
        <authorList>
            <person name="Ikegawa S."/>
            <person name="Toda T."/>
            <person name="Okui K."/>
            <person name="Nakamura Y."/>
        </authorList>
    </citation>
    <scope>NUCLEOTIDE SEQUENCE [MRNA]</scope>
</reference>
<reference key="3">
    <citation type="journal article" date="1999" name="Matrix Biol.">
        <title>Sequence, recombinant expression and tissue localization of two novel extracellular matrix proteins, fibulin-3 and fibulin-4.</title>
        <authorList>
            <person name="Giltay R."/>
            <person name="Timpl R."/>
            <person name="Kostka G."/>
        </authorList>
    </citation>
    <scope>NUCLEOTIDE SEQUENCE [MRNA]</scope>
</reference>
<reference key="4">
    <citation type="journal article" date="2001" name="Ophthalmic Genet.">
        <title>EFEMP1 is not associated with sporadic early onset drusen.</title>
        <authorList>
            <person name="Sauer C.G."/>
            <person name="White K."/>
            <person name="Kellner U."/>
            <person name="Rudolph G."/>
            <person name="Jurklies B."/>
            <person name="Pauleikhoff D."/>
            <person name="Weber B.H."/>
        </authorList>
    </citation>
    <scope>NUCLEOTIDE SEQUENCE [GENOMIC DNA]</scope>
</reference>
<reference key="5">
    <citation type="journal article" date="2004" name="Nat. Genet.">
        <title>Complete sequencing and characterization of 21,243 full-length human cDNAs.</title>
        <authorList>
            <person name="Ota T."/>
            <person name="Suzuki Y."/>
            <person name="Nishikawa T."/>
            <person name="Otsuki T."/>
            <person name="Sugiyama T."/>
            <person name="Irie R."/>
            <person name="Wakamatsu A."/>
            <person name="Hayashi K."/>
            <person name="Sato H."/>
            <person name="Nagai K."/>
            <person name="Kimura K."/>
            <person name="Makita H."/>
            <person name="Sekine M."/>
            <person name="Obayashi M."/>
            <person name="Nishi T."/>
            <person name="Shibahara T."/>
            <person name="Tanaka T."/>
            <person name="Ishii S."/>
            <person name="Yamamoto J."/>
            <person name="Saito K."/>
            <person name="Kawai Y."/>
            <person name="Isono Y."/>
            <person name="Nakamura Y."/>
            <person name="Nagahari K."/>
            <person name="Murakami K."/>
            <person name="Yasuda T."/>
            <person name="Iwayanagi T."/>
            <person name="Wagatsuma M."/>
            <person name="Shiratori A."/>
            <person name="Sudo H."/>
            <person name="Hosoiri T."/>
            <person name="Kaku Y."/>
            <person name="Kodaira H."/>
            <person name="Kondo H."/>
            <person name="Sugawara M."/>
            <person name="Takahashi M."/>
            <person name="Kanda K."/>
            <person name="Yokoi T."/>
            <person name="Furuya T."/>
            <person name="Kikkawa E."/>
            <person name="Omura Y."/>
            <person name="Abe K."/>
            <person name="Kamihara K."/>
            <person name="Katsuta N."/>
            <person name="Sato K."/>
            <person name="Tanikawa M."/>
            <person name="Yamazaki M."/>
            <person name="Ninomiya K."/>
            <person name="Ishibashi T."/>
            <person name="Yamashita H."/>
            <person name="Murakawa K."/>
            <person name="Fujimori K."/>
            <person name="Tanai H."/>
            <person name="Kimata M."/>
            <person name="Watanabe M."/>
            <person name="Hiraoka S."/>
            <person name="Chiba Y."/>
            <person name="Ishida S."/>
            <person name="Ono Y."/>
            <person name="Takiguchi S."/>
            <person name="Watanabe S."/>
            <person name="Yosida M."/>
            <person name="Hotuta T."/>
            <person name="Kusano J."/>
            <person name="Kanehori K."/>
            <person name="Takahashi-Fujii A."/>
            <person name="Hara H."/>
            <person name="Tanase T.-O."/>
            <person name="Nomura Y."/>
            <person name="Togiya S."/>
            <person name="Komai F."/>
            <person name="Hara R."/>
            <person name="Takeuchi K."/>
            <person name="Arita M."/>
            <person name="Imose N."/>
            <person name="Musashino K."/>
            <person name="Yuuki H."/>
            <person name="Oshima A."/>
            <person name="Sasaki N."/>
            <person name="Aotsuka S."/>
            <person name="Yoshikawa Y."/>
            <person name="Matsunawa H."/>
            <person name="Ichihara T."/>
            <person name="Shiohata N."/>
            <person name="Sano S."/>
            <person name="Moriya S."/>
            <person name="Momiyama H."/>
            <person name="Satoh N."/>
            <person name="Takami S."/>
            <person name="Terashima Y."/>
            <person name="Suzuki O."/>
            <person name="Nakagawa S."/>
            <person name="Senoh A."/>
            <person name="Mizoguchi H."/>
            <person name="Goto Y."/>
            <person name="Shimizu F."/>
            <person name="Wakebe H."/>
            <person name="Hishigaki H."/>
            <person name="Watanabe T."/>
            <person name="Sugiyama A."/>
            <person name="Takemoto M."/>
            <person name="Kawakami B."/>
            <person name="Yamazaki M."/>
            <person name="Watanabe K."/>
            <person name="Kumagai A."/>
            <person name="Itakura S."/>
            <person name="Fukuzumi Y."/>
            <person name="Fujimori Y."/>
            <person name="Komiyama M."/>
            <person name="Tashiro H."/>
            <person name="Tanigami A."/>
            <person name="Fujiwara T."/>
            <person name="Ono T."/>
            <person name="Yamada K."/>
            <person name="Fujii Y."/>
            <person name="Ozaki K."/>
            <person name="Hirao M."/>
            <person name="Ohmori Y."/>
            <person name="Kawabata A."/>
            <person name="Hikiji T."/>
            <person name="Kobatake N."/>
            <person name="Inagaki H."/>
            <person name="Ikema Y."/>
            <person name="Okamoto S."/>
            <person name="Okitani R."/>
            <person name="Kawakami T."/>
            <person name="Noguchi S."/>
            <person name="Itoh T."/>
            <person name="Shigeta K."/>
            <person name="Senba T."/>
            <person name="Matsumura K."/>
            <person name="Nakajima Y."/>
            <person name="Mizuno T."/>
            <person name="Morinaga M."/>
            <person name="Sasaki M."/>
            <person name="Togashi T."/>
            <person name="Oyama M."/>
            <person name="Hata H."/>
            <person name="Watanabe M."/>
            <person name="Komatsu T."/>
            <person name="Mizushima-Sugano J."/>
            <person name="Satoh T."/>
            <person name="Shirai Y."/>
            <person name="Takahashi Y."/>
            <person name="Nakagawa K."/>
            <person name="Okumura K."/>
            <person name="Nagase T."/>
            <person name="Nomura N."/>
            <person name="Kikuchi H."/>
            <person name="Masuho Y."/>
            <person name="Yamashita R."/>
            <person name="Nakai K."/>
            <person name="Yada T."/>
            <person name="Nakamura Y."/>
            <person name="Ohara O."/>
            <person name="Isogai T."/>
            <person name="Sugano S."/>
        </authorList>
    </citation>
    <scope>NUCLEOTIDE SEQUENCE [LARGE SCALE MRNA] (ISOFORMS 1 AND 5)</scope>
    <source>
        <tissue>Synovium</tissue>
    </source>
</reference>
<reference key="6">
    <citation type="journal article" date="2005" name="Nature">
        <title>Generation and annotation of the DNA sequences of human chromosomes 2 and 4.</title>
        <authorList>
            <person name="Hillier L.W."/>
            <person name="Graves T.A."/>
            <person name="Fulton R.S."/>
            <person name="Fulton L.A."/>
            <person name="Pepin K.H."/>
            <person name="Minx P."/>
            <person name="Wagner-McPherson C."/>
            <person name="Layman D."/>
            <person name="Wylie K."/>
            <person name="Sekhon M."/>
            <person name="Becker M.C."/>
            <person name="Fewell G.A."/>
            <person name="Delehaunty K.D."/>
            <person name="Miner T.L."/>
            <person name="Nash W.E."/>
            <person name="Kremitzki C."/>
            <person name="Oddy L."/>
            <person name="Du H."/>
            <person name="Sun H."/>
            <person name="Bradshaw-Cordum H."/>
            <person name="Ali J."/>
            <person name="Carter J."/>
            <person name="Cordes M."/>
            <person name="Harris A."/>
            <person name="Isak A."/>
            <person name="van Brunt A."/>
            <person name="Nguyen C."/>
            <person name="Du F."/>
            <person name="Courtney L."/>
            <person name="Kalicki J."/>
            <person name="Ozersky P."/>
            <person name="Abbott S."/>
            <person name="Armstrong J."/>
            <person name="Belter E.A."/>
            <person name="Caruso L."/>
            <person name="Cedroni M."/>
            <person name="Cotton M."/>
            <person name="Davidson T."/>
            <person name="Desai A."/>
            <person name="Elliott G."/>
            <person name="Erb T."/>
            <person name="Fronick C."/>
            <person name="Gaige T."/>
            <person name="Haakenson W."/>
            <person name="Haglund K."/>
            <person name="Holmes A."/>
            <person name="Harkins R."/>
            <person name="Kim K."/>
            <person name="Kruchowski S.S."/>
            <person name="Strong C.M."/>
            <person name="Grewal N."/>
            <person name="Goyea E."/>
            <person name="Hou S."/>
            <person name="Levy A."/>
            <person name="Martinka S."/>
            <person name="Mead K."/>
            <person name="McLellan M.D."/>
            <person name="Meyer R."/>
            <person name="Randall-Maher J."/>
            <person name="Tomlinson C."/>
            <person name="Dauphin-Kohlberg S."/>
            <person name="Kozlowicz-Reilly A."/>
            <person name="Shah N."/>
            <person name="Swearengen-Shahid S."/>
            <person name="Snider J."/>
            <person name="Strong J.T."/>
            <person name="Thompson J."/>
            <person name="Yoakum M."/>
            <person name="Leonard S."/>
            <person name="Pearman C."/>
            <person name="Trani L."/>
            <person name="Radionenko M."/>
            <person name="Waligorski J.E."/>
            <person name="Wang C."/>
            <person name="Rock S.M."/>
            <person name="Tin-Wollam A.-M."/>
            <person name="Maupin R."/>
            <person name="Latreille P."/>
            <person name="Wendl M.C."/>
            <person name="Yang S.-P."/>
            <person name="Pohl C."/>
            <person name="Wallis J.W."/>
            <person name="Spieth J."/>
            <person name="Bieri T.A."/>
            <person name="Berkowicz N."/>
            <person name="Nelson J.O."/>
            <person name="Osborne J."/>
            <person name="Ding L."/>
            <person name="Meyer R."/>
            <person name="Sabo A."/>
            <person name="Shotland Y."/>
            <person name="Sinha P."/>
            <person name="Wohldmann P.E."/>
            <person name="Cook L.L."/>
            <person name="Hickenbotham M.T."/>
            <person name="Eldred J."/>
            <person name="Williams D."/>
            <person name="Jones T.A."/>
            <person name="She X."/>
            <person name="Ciccarelli F.D."/>
            <person name="Izaurralde E."/>
            <person name="Taylor J."/>
            <person name="Schmutz J."/>
            <person name="Myers R.M."/>
            <person name="Cox D.R."/>
            <person name="Huang X."/>
            <person name="McPherson J.D."/>
            <person name="Mardis E.R."/>
            <person name="Clifton S.W."/>
            <person name="Warren W.C."/>
            <person name="Chinwalla A.T."/>
            <person name="Eddy S.R."/>
            <person name="Marra M.A."/>
            <person name="Ovcharenko I."/>
            <person name="Furey T.S."/>
            <person name="Miller W."/>
            <person name="Eichler E.E."/>
            <person name="Bork P."/>
            <person name="Suyama M."/>
            <person name="Torrents D."/>
            <person name="Waterston R.H."/>
            <person name="Wilson R.K."/>
        </authorList>
    </citation>
    <scope>NUCLEOTIDE SEQUENCE [LARGE SCALE GENOMIC DNA]</scope>
</reference>
<reference key="7">
    <citation type="submission" date="2005-09" db="EMBL/GenBank/DDBJ databases">
        <authorList>
            <person name="Mural R.J."/>
            <person name="Istrail S."/>
            <person name="Sutton G.G."/>
            <person name="Florea L."/>
            <person name="Halpern A.L."/>
            <person name="Mobarry C.M."/>
            <person name="Lippert R."/>
            <person name="Walenz B."/>
            <person name="Shatkay H."/>
            <person name="Dew I."/>
            <person name="Miller J.R."/>
            <person name="Flanigan M.J."/>
            <person name="Edwards N.J."/>
            <person name="Bolanos R."/>
            <person name="Fasulo D."/>
            <person name="Halldorsson B.V."/>
            <person name="Hannenhalli S."/>
            <person name="Turner R."/>
            <person name="Yooseph S."/>
            <person name="Lu F."/>
            <person name="Nusskern D.R."/>
            <person name="Shue B.C."/>
            <person name="Zheng X.H."/>
            <person name="Zhong F."/>
            <person name="Delcher A.L."/>
            <person name="Huson D.H."/>
            <person name="Kravitz S.A."/>
            <person name="Mouchard L."/>
            <person name="Reinert K."/>
            <person name="Remington K.A."/>
            <person name="Clark A.G."/>
            <person name="Waterman M.S."/>
            <person name="Eichler E.E."/>
            <person name="Adams M.D."/>
            <person name="Hunkapiller M.W."/>
            <person name="Myers E.W."/>
            <person name="Venter J.C."/>
        </authorList>
    </citation>
    <scope>NUCLEOTIDE SEQUENCE [LARGE SCALE GENOMIC DNA]</scope>
</reference>
<reference key="8">
    <citation type="journal article" date="2004" name="Genome Res.">
        <title>The status, quality, and expansion of the NIH full-length cDNA project: the Mammalian Gene Collection (MGC).</title>
        <authorList>
            <consortium name="The MGC Project Team"/>
        </authorList>
    </citation>
    <scope>NUCLEOTIDE SEQUENCE [LARGE SCALE MRNA] (ISOFORM 1)</scope>
    <source>
        <tissue>Lung</tissue>
    </source>
</reference>
<reference key="9">
    <citation type="journal article" date="2002" name="Proc. Natl. Acad. Sci. U.S.A.">
        <title>Aberrant accumulation of EFEMP1 underlies drusen formation in Malattia Leventinese and age-related macular degeneration.</title>
        <authorList>
            <person name="Marmorstein L.Y."/>
            <person name="Munier F.L."/>
            <person name="Arsenijevic Y."/>
            <person name="Schorderet D.F."/>
            <person name="McLaughlin P.J."/>
            <person name="Chung D."/>
            <person name="Traboulsi E."/>
            <person name="Marmorstein A.D."/>
        </authorList>
    </citation>
    <scope>TISSUE SPECIFICITY</scope>
    <scope>CHARACTERIZATION OF VARIANT DHRD TRP-345</scope>
</reference>
<reference key="10">
    <citation type="journal article" date="2004" name="J. Biol. Chem.">
        <title>Tissue inhibitor of metalloproteinases-3 (TIMP-3) is a binding partner of epithelial growth factor-containing fibulin-like extracellular matrix protein 1 (EFEMP1). Implications for macular degenerations.</title>
        <authorList>
            <person name="Klenotic P.A."/>
            <person name="Munier F.L."/>
            <person name="Marmorstein L.Y."/>
            <person name="Anand-Apte B."/>
        </authorList>
    </citation>
    <scope>INTERACTION WITH TIMP3</scope>
</reference>
<reference key="11">
    <citation type="journal article" date="2009" name="Biol. Chem.">
        <title>EFEMP1 binds the EGF receptor and activates MAPK and Akt pathways in pancreatic carcinoma cells.</title>
        <authorList>
            <person name="Camaj P."/>
            <person name="Seeliger H."/>
            <person name="Ischenko I."/>
            <person name="Krebs S."/>
            <person name="Blum H."/>
            <person name="De Toni E.N."/>
            <person name="Faktorova D."/>
            <person name="Jauch K.W."/>
            <person name="Bruns C.J."/>
        </authorList>
    </citation>
    <scope>FUNCTION IN EGFR ACTIVATION</scope>
</reference>
<reference key="12">
    <citation type="journal article" date="2009" name="Matrix Biol.">
        <title>ECM1 interacts with fibulin-3 and the beta 3 chain of laminin 332 through its serum albumin subdomain-like 2 domain.</title>
        <authorList>
            <person name="Sercu S."/>
            <person name="Lambeir A.M."/>
            <person name="Steenackers E."/>
            <person name="El Ghalbzouri A."/>
            <person name="Geentjens K."/>
            <person name="Sasaki T."/>
            <person name="Oyama N."/>
            <person name="Merregaert J."/>
        </authorList>
    </citation>
    <scope>INTERACTION WITH ECM1</scope>
</reference>
<reference key="13">
    <citation type="journal article" date="2009" name="Mol. Cancer Res.">
        <title>Fibulin-3 is uniquely upregulated in malignant gliomas and promotes tumor cell motility and invasion.</title>
        <authorList>
            <person name="Hu B."/>
            <person name="Thirtamara-Rajamani K.K."/>
            <person name="Sim H."/>
            <person name="Viapiano M.S."/>
        </authorList>
    </citation>
    <scope>FUNCTION</scope>
</reference>
<reference key="14">
    <citation type="journal article" date="2010" name="Biochem. Biophys. Res. Commun.">
        <title>Fibulin-3 negatively regulates chondrocyte differentiation.</title>
        <authorList>
            <person name="Wakabayashi T."/>
            <person name="Matsumine A."/>
            <person name="Nakazora S."/>
            <person name="Hasegawa M."/>
            <person name="Iino T."/>
            <person name="Ota H."/>
            <person name="Sonoda H."/>
            <person name="Sudo A."/>
            <person name="Uchida A."/>
        </authorList>
    </citation>
    <scope>FUNCTION</scope>
    <scope>SUBCELLULAR LOCATION</scope>
    <scope>TISSUE SPECIFICITY</scope>
</reference>
<reference key="15">
    <citation type="journal article" date="2012" name="J. Proteome Res.">
        <title>Resveratrol-induced changes of the human adipocyte secretion profile.</title>
        <authorList>
            <person name="Rosenow A."/>
            <person name="Noben J.P."/>
            <person name="Jocken J."/>
            <person name="Kallendrusch S."/>
            <person name="Fischer-Posovszky P."/>
            <person name="Mariman E.C."/>
            <person name="Renes J."/>
        </authorList>
    </citation>
    <scope>IDENTIFICATION BY MASS SPECTROMETRY [LARGE SCALE ANALYSIS]</scope>
</reference>
<reference key="16">
    <citation type="journal article" date="2014" name="J. Proteomics">
        <title>An enzyme assisted RP-RPLC approach for in-depth analysis of human liver phosphoproteome.</title>
        <authorList>
            <person name="Bian Y."/>
            <person name="Song C."/>
            <person name="Cheng K."/>
            <person name="Dong M."/>
            <person name="Wang F."/>
            <person name="Huang J."/>
            <person name="Sun D."/>
            <person name="Wang L."/>
            <person name="Ye M."/>
            <person name="Zou H."/>
        </authorList>
    </citation>
    <scope>IDENTIFICATION BY MASS SPECTROMETRY [LARGE SCALE ANALYSIS]</scope>
    <source>
        <tissue>Liver</tissue>
    </source>
</reference>
<reference key="17">
    <citation type="journal article" date="1999" name="Nat. Genet.">
        <title>A single EFEMP1 mutation associated with both malattia Leventinese and Doyne honeycomb retinal dystrophy.</title>
        <authorList>
            <person name="Stone E.M."/>
            <person name="Lotery A.J."/>
            <person name="Munier F.L."/>
            <person name="Heon E."/>
            <person name="Piguet B."/>
            <person name="Guymer R.H."/>
            <person name="Vandenburgh K."/>
            <person name="Cousin P."/>
            <person name="Nishimura D."/>
            <person name="Swiderski R.E."/>
            <person name="Silvestri G."/>
            <person name="Mackey D.A."/>
            <person name="Hagerman G.S."/>
            <person name="Bird A.C."/>
            <person name="Sheffield V.C."/>
            <person name="Schorderet D.F."/>
        </authorList>
    </citation>
    <scope>INVOLVEMENT IN DHRD</scope>
    <scope>VARIANT DHRD TRP-345</scope>
    <scope>VARIANT PHE-220</scope>
</reference>
<reference key="18">
    <citation type="journal article" date="2001" name="Am. J. Ophthalmol.">
        <title>Dominant radial drusen and Arg345Trp EFEMP1 mutation.</title>
        <authorList>
            <person name="Matsumoto M."/>
            <person name="Traboulsi E.I."/>
        </authorList>
    </citation>
    <scope>INVOLVEMENT IN DHRD</scope>
    <scope>VARIANT DHRD TRP-345</scope>
</reference>
<reference key="19">
    <citation type="journal article" date="2007" name="Hum. Mol. Genet.">
        <title>The R345W mutation in EFEMP1 is pathogenic and causes AMD-like deposits in mice.</title>
        <authorList>
            <person name="Fu L."/>
            <person name="Garland D."/>
            <person name="Yang Z."/>
            <person name="Shukla D."/>
            <person name="Rajendran A."/>
            <person name="Pearson E."/>
            <person name="Stone E.M."/>
            <person name="Zhang K."/>
            <person name="Pierce E.A."/>
        </authorList>
    </citation>
    <scope>CHARACTERIZATION OF VARIANT DHRD TRP-345</scope>
</reference>
<reference key="20">
    <citation type="journal article" date="2015" name="PLoS ONE">
        <title>Exome sequencing identifies a missense variant in EFEMP1 co-segregating in a family with autosomal dominant primary open-angle glaucoma.</title>
        <authorList>
            <person name="Mackay D.S."/>
            <person name="Bennett T.M."/>
            <person name="Shiels A."/>
        </authorList>
    </citation>
    <scope>INVOLVEMENT IN GLC1H</scope>
    <scope>VARIANT GLC1H TRP-140</scope>
</reference>
<reference key="21">
    <citation type="journal article" date="2020" name="Eur. J. Hum. Genet.">
        <title>Biallelic variants in EFEMP1 in a man with a pronounced connective tissue phenotype.</title>
        <authorList>
            <person name="Driver S.G.W."/>
            <person name="Jackson M.R."/>
            <person name="Richter K."/>
            <person name="Tomlinson P."/>
            <person name="Brockway B."/>
            <person name="Halliday B.J."/>
            <person name="Markie D.M."/>
            <person name="Robertson S.P."/>
            <person name="Wade E.M."/>
        </authorList>
    </citation>
    <scope>INVOLVEMENT IN ARCL1D</scope>
    <scope>VARIANT ARCL1D 205-TYR--PHE-493 DEL</scope>
</reference>
<reference key="22">
    <citation type="journal article" date="2020" name="Eur. J. Med. Genet.">
        <title>Recessive marfanoid syndrome with herniation associated with a homozygous mutation in Fibulin-3.</title>
        <authorList>
            <person name="Bizzari S."/>
            <person name="El-Bazzal L."/>
            <person name="Nair P."/>
            <person name="Younan A."/>
            <person name="Stora S."/>
            <person name="Mehawej C."/>
            <person name="El-Hayek S."/>
            <person name="Delague V."/>
            <person name="Megarbane A."/>
        </authorList>
    </citation>
    <scope>VARIANT ARCL1D ARG-55</scope>
</reference>
<reference key="23">
    <citation type="journal article" date="2021" name="Genes (Basel)">
        <title>Loss-of-Function Variants in EFEMP1 Cause a Recognizable Connective Tissue Disorder Characterized by Cutis Laxa and Multiple Herniations.</title>
        <authorList>
            <person name="Verlee M."/>
            <person name="Beyens A."/>
            <person name="Gezdirici A."/>
            <person name="Gulec E.Y."/>
            <person name="Pottie L."/>
            <person name="De Feyter S."/>
            <person name="Vanhooydonck M."/>
            <person name="Tapaneeyaphan P."/>
            <person name="Symoens S."/>
            <person name="Callewaert B."/>
        </authorList>
    </citation>
    <scope>VARIANT ARCL1D 401-ARG--PHE-493 DEL</scope>
</reference>
<reference key="24">
    <citation type="journal article" date="2022" name="Hum. Mutat.">
        <title>EFEMP1 rare variants cause familial juvenile-onset open-angle glaucoma.</title>
        <authorList>
            <person name="Collantes E.R.A."/>
            <person name="Delfin M.S."/>
            <person name="Fan B."/>
            <person name="Torregosa J.M.R."/>
            <person name="Siguan-Bell C."/>
            <person name="Florcruz N.V.G."/>
            <person name="Martinez J.M.D."/>
            <person name="Masna-Hidalgo B.J."/>
            <person name="Guzman V.P.T."/>
            <person name="Anotado-Flores J.F."/>
            <person name="Levina F.D."/>
            <person name="Hernandez S.R.C."/>
            <person name="Collantes A.A."/>
            <person name="Sibulo M.C."/>
            <person name="Rong S."/>
            <person name="Wiggs J.L."/>
        </authorList>
    </citation>
    <scope>VARIANTS GLC1H TYR-80 AND CYS-477</scope>
    <scope>CHARACTERIZATION OF VARIANTS GLC1H TYR-80; TRP-140 AND CYS-477</scope>
    <scope>CHARACTERIZATION OF VARIANT DHRD TRP-345</scope>
</reference>
<reference key="25">
    <citation type="journal article" date="2022" name="Hum. Mutat.">
        <title>EFEMP1 rare variants cause familial juvenile-onset open-angle glaucoma.</title>
        <authorList>
            <person name="Collantes E.R.A."/>
            <person name="Delfin M.S."/>
            <person name="Fan B."/>
            <person name="Torregosa J.M.R."/>
            <person name="Siguan-Bell C."/>
            <person name="Vincent de Guzman Florcruz N."/>
            <person name="Martinez J.M.D."/>
            <person name="Joy Masna-Hidalgo B."/>
            <person name="Guzman V.P.T."/>
            <person name="Anotado-Flores J.F."/>
            <person name="Levina F.D."/>
            <person name="Hernandez S.R.C."/>
            <person name="Collantes A.A."/>
            <person name="Sibulo M.C."/>
            <person name="Rong S."/>
            <person name="Wiggs J.L."/>
        </authorList>
    </citation>
    <scope>ERRATUM OF PUBMED:34923728</scope>
</reference>
<reference key="26">
    <citation type="journal article" date="2022" name="Hum. Mutat.">
        <title>A loss-of-function cysteine mutant in fibulin-3 (EFEMP1) forms aberrant extracellular disulfide-linked homodimers and alters extracellular matrix composition.</title>
        <authorList>
            <person name="Woodard D.R."/>
            <person name="Daniel S."/>
            <person name="Nakahara E."/>
            <person name="Abbas A."/>
            <person name="DiCesare S.M."/>
            <person name="Collier G.E."/>
            <person name="Hulleman J.D."/>
        </authorList>
    </citation>
    <scope>CHARACTERIZATION OF VARIANT ARCL1D ARG-55</scope>
    <scope>MUTAGENESIS OF CYS-29; CYS-42; CYS-48; CYS-55; CYS-61; CYS-70; CYS-159 AND CYS-171</scope>
    <scope>SUBCELLULAR LOCATION</scope>
</reference>
<accession>Q12805</accession>
<accession>A8K3I4</accession>
<accession>B4DW75</accession>
<accession>D6W5D2</accession>
<accession>Q541U7</accession>
<dbReference type="EMBL" id="U03877">
    <property type="protein sequence ID" value="AAA65590.1"/>
    <property type="molecule type" value="mRNA"/>
</dbReference>
<dbReference type="EMBL" id="AY004330">
    <property type="protein sequence ID" value="AAK11491.1"/>
    <property type="molecule type" value="Genomic_DNA"/>
</dbReference>
<dbReference type="EMBL" id="AY004321">
    <property type="protein sequence ID" value="AAK11491.1"/>
    <property type="status" value="JOINED"/>
    <property type="molecule type" value="Genomic_DNA"/>
</dbReference>
<dbReference type="EMBL" id="AY004322">
    <property type="protein sequence ID" value="AAK11491.1"/>
    <property type="status" value="JOINED"/>
    <property type="molecule type" value="Genomic_DNA"/>
</dbReference>
<dbReference type="EMBL" id="AY004325">
    <property type="protein sequence ID" value="AAK11491.1"/>
    <property type="status" value="JOINED"/>
    <property type="molecule type" value="Genomic_DNA"/>
</dbReference>
<dbReference type="EMBL" id="AY004324">
    <property type="protein sequence ID" value="AAK11491.1"/>
    <property type="status" value="JOINED"/>
    <property type="molecule type" value="Genomic_DNA"/>
</dbReference>
<dbReference type="EMBL" id="AY004323">
    <property type="protein sequence ID" value="AAK11491.1"/>
    <property type="status" value="JOINED"/>
    <property type="molecule type" value="Genomic_DNA"/>
</dbReference>
<dbReference type="EMBL" id="AY004326">
    <property type="protein sequence ID" value="AAK11491.1"/>
    <property type="status" value="JOINED"/>
    <property type="molecule type" value="Genomic_DNA"/>
</dbReference>
<dbReference type="EMBL" id="AY004328">
    <property type="protein sequence ID" value="AAK11491.1"/>
    <property type="status" value="JOINED"/>
    <property type="molecule type" value="Genomic_DNA"/>
</dbReference>
<dbReference type="EMBL" id="AY004329">
    <property type="protein sequence ID" value="AAK11491.1"/>
    <property type="status" value="JOINED"/>
    <property type="molecule type" value="Genomic_DNA"/>
</dbReference>
<dbReference type="EMBL" id="AY004327">
    <property type="protein sequence ID" value="AAK11491.1"/>
    <property type="status" value="JOINED"/>
    <property type="molecule type" value="Genomic_DNA"/>
</dbReference>
<dbReference type="EMBL" id="AK290599">
    <property type="protein sequence ID" value="BAF83288.1"/>
    <property type="molecule type" value="mRNA"/>
</dbReference>
<dbReference type="EMBL" id="AK301402">
    <property type="protein sequence ID" value="BAG62937.1"/>
    <property type="molecule type" value="mRNA"/>
</dbReference>
<dbReference type="EMBL" id="AC010895">
    <property type="status" value="NOT_ANNOTATED_CDS"/>
    <property type="molecule type" value="Genomic_DNA"/>
</dbReference>
<dbReference type="EMBL" id="AC096549">
    <property type="status" value="NOT_ANNOTATED_CDS"/>
    <property type="molecule type" value="Genomic_DNA"/>
</dbReference>
<dbReference type="EMBL" id="CH471053">
    <property type="protein sequence ID" value="EAX00080.1"/>
    <property type="molecule type" value="Genomic_DNA"/>
</dbReference>
<dbReference type="EMBL" id="CH471053">
    <property type="protein sequence ID" value="EAX00081.1"/>
    <property type="molecule type" value="Genomic_DNA"/>
</dbReference>
<dbReference type="EMBL" id="CH471053">
    <property type="protein sequence ID" value="EAX00082.1"/>
    <property type="molecule type" value="Genomic_DNA"/>
</dbReference>
<dbReference type="EMBL" id="BC014410">
    <property type="protein sequence ID" value="AAH14410.1"/>
    <property type="molecule type" value="mRNA"/>
</dbReference>
<dbReference type="EMBL" id="BC098561">
    <property type="protein sequence ID" value="AAH98561.1"/>
    <property type="molecule type" value="mRNA"/>
</dbReference>
<dbReference type="CCDS" id="CCDS1857.1">
    <molecule id="Q12805-1"/>
</dbReference>
<dbReference type="PIR" id="I38449">
    <property type="entry name" value="I38449"/>
</dbReference>
<dbReference type="RefSeq" id="NP_001034437.1">
    <molecule id="Q12805-1"/>
    <property type="nucleotide sequence ID" value="NM_001039348.3"/>
</dbReference>
<dbReference type="RefSeq" id="NP_001034438.1">
    <molecule id="Q12805-1"/>
    <property type="nucleotide sequence ID" value="NM_001039349.3"/>
</dbReference>
<dbReference type="BioGRID" id="108496">
    <property type="interactions" value="124"/>
</dbReference>
<dbReference type="FunCoup" id="Q12805">
    <property type="interactions" value="225"/>
</dbReference>
<dbReference type="IntAct" id="Q12805">
    <property type="interactions" value="107"/>
</dbReference>
<dbReference type="MINT" id="Q12805"/>
<dbReference type="STRING" id="9606.ENSP00000378058"/>
<dbReference type="GlyCosmos" id="Q12805">
    <property type="glycosylation" value="8 sites, 5 glycans"/>
</dbReference>
<dbReference type="GlyGen" id="Q12805">
    <property type="glycosylation" value="9 sites, 7 O-linked glycans (8 sites)"/>
</dbReference>
<dbReference type="iPTMnet" id="Q12805"/>
<dbReference type="PhosphoSitePlus" id="Q12805"/>
<dbReference type="SwissPalm" id="Q12805"/>
<dbReference type="BioMuta" id="EFEMP1"/>
<dbReference type="DMDM" id="9973182"/>
<dbReference type="jPOST" id="Q12805"/>
<dbReference type="MassIVE" id="Q12805"/>
<dbReference type="PaxDb" id="9606-ENSP00000378058"/>
<dbReference type="PeptideAtlas" id="Q12805"/>
<dbReference type="ProteomicsDB" id="5317"/>
<dbReference type="ProteomicsDB" id="58959">
    <molecule id="Q12805-1"/>
</dbReference>
<dbReference type="ProteomicsDB" id="58960">
    <molecule id="Q12805-2"/>
</dbReference>
<dbReference type="ProteomicsDB" id="58961">
    <molecule id="Q12805-3"/>
</dbReference>
<dbReference type="ProteomicsDB" id="58962">
    <molecule id="Q12805-4"/>
</dbReference>
<dbReference type="Pumba" id="Q12805"/>
<dbReference type="ABCD" id="Q12805">
    <property type="antibodies" value="1 sequenced antibody"/>
</dbReference>
<dbReference type="Antibodypedia" id="30453">
    <property type="antibodies" value="390 antibodies from 37 providers"/>
</dbReference>
<dbReference type="DNASU" id="2202"/>
<dbReference type="Ensembl" id="ENST00000355426.8">
    <molecule id="Q12805-1"/>
    <property type="protein sequence ID" value="ENSP00000347596.3"/>
    <property type="gene ID" value="ENSG00000115380.20"/>
</dbReference>
<dbReference type="Ensembl" id="ENST00000394555.6">
    <molecule id="Q12805-1"/>
    <property type="protein sequence ID" value="ENSP00000378058.2"/>
    <property type="gene ID" value="ENSG00000115380.20"/>
</dbReference>
<dbReference type="GeneID" id="2202"/>
<dbReference type="KEGG" id="hsa:2202"/>
<dbReference type="MANE-Select" id="ENST00000355426.8">
    <property type="protein sequence ID" value="ENSP00000347596.3"/>
    <property type="RefSeq nucleotide sequence ID" value="NM_001039348.3"/>
    <property type="RefSeq protein sequence ID" value="NP_001034437.1"/>
</dbReference>
<dbReference type="UCSC" id="uc002rzi.4">
    <molecule id="Q12805-1"/>
    <property type="organism name" value="human"/>
</dbReference>
<dbReference type="AGR" id="HGNC:3218"/>
<dbReference type="CTD" id="2202"/>
<dbReference type="DisGeNET" id="2202"/>
<dbReference type="GeneCards" id="EFEMP1"/>
<dbReference type="HGNC" id="HGNC:3218">
    <property type="gene designation" value="EFEMP1"/>
</dbReference>
<dbReference type="HPA" id="ENSG00000115380">
    <property type="expression patterns" value="Low tissue specificity"/>
</dbReference>
<dbReference type="MalaCards" id="EFEMP1"/>
<dbReference type="MIM" id="126600">
    <property type="type" value="phenotype"/>
</dbReference>
<dbReference type="MIM" id="601548">
    <property type="type" value="gene"/>
</dbReference>
<dbReference type="MIM" id="611276">
    <property type="type" value="phenotype"/>
</dbReference>
<dbReference type="MIM" id="620780">
    <property type="type" value="phenotype"/>
</dbReference>
<dbReference type="neXtProt" id="NX_Q12805"/>
<dbReference type="OpenTargets" id="ENSG00000115380"/>
<dbReference type="Orphanet" id="75376">
    <property type="disease" value="Familial drusen"/>
</dbReference>
<dbReference type="Orphanet" id="98977">
    <property type="disease" value="Juvenile glaucoma"/>
</dbReference>
<dbReference type="PharmGKB" id="PA27652"/>
<dbReference type="VEuPathDB" id="HostDB:ENSG00000115380"/>
<dbReference type="eggNOG" id="KOG1217">
    <property type="taxonomic scope" value="Eukaryota"/>
</dbReference>
<dbReference type="GeneTree" id="ENSGT00940000157837"/>
<dbReference type="HOGENOM" id="CLU_004826_0_1_1"/>
<dbReference type="InParanoid" id="Q12805"/>
<dbReference type="OMA" id="CETRNEC"/>
<dbReference type="OrthoDB" id="4062651at2759"/>
<dbReference type="PAN-GO" id="Q12805">
    <property type="GO annotations" value="0 GO annotations based on evolutionary models"/>
</dbReference>
<dbReference type="PhylomeDB" id="Q12805"/>
<dbReference type="TreeFam" id="TF317514"/>
<dbReference type="PathwayCommons" id="Q12805"/>
<dbReference type="Reactome" id="R-HSA-2129379">
    <property type="pathway name" value="Molecules associated with elastic fibres"/>
</dbReference>
<dbReference type="SignaLink" id="Q12805"/>
<dbReference type="BioGRID-ORCS" id="2202">
    <property type="hits" value="15 hits in 1144 CRISPR screens"/>
</dbReference>
<dbReference type="ChiTaRS" id="EFEMP1">
    <property type="organism name" value="human"/>
</dbReference>
<dbReference type="GeneWiki" id="EFEMP1"/>
<dbReference type="GenomeRNAi" id="2202"/>
<dbReference type="Pharos" id="Q12805">
    <property type="development level" value="Tbio"/>
</dbReference>
<dbReference type="PRO" id="PR:Q12805"/>
<dbReference type="Proteomes" id="UP000005640">
    <property type="component" value="Chromosome 2"/>
</dbReference>
<dbReference type="RNAct" id="Q12805">
    <property type="molecule type" value="protein"/>
</dbReference>
<dbReference type="Bgee" id="ENSG00000115380">
    <property type="expression patterns" value="Expressed in right coronary artery and 206 other cell types or tissues"/>
</dbReference>
<dbReference type="ExpressionAtlas" id="Q12805">
    <property type="expression patterns" value="baseline and differential"/>
</dbReference>
<dbReference type="GO" id="GO:0062023">
    <property type="term" value="C:collagen-containing extracellular matrix"/>
    <property type="evidence" value="ECO:0007005"/>
    <property type="project" value="BHF-UCL"/>
</dbReference>
<dbReference type="GO" id="GO:0070062">
    <property type="term" value="C:extracellular exosome"/>
    <property type="evidence" value="ECO:0007005"/>
    <property type="project" value="UniProtKB"/>
</dbReference>
<dbReference type="GO" id="GO:0031012">
    <property type="term" value="C:extracellular matrix"/>
    <property type="evidence" value="ECO:0000315"/>
    <property type="project" value="UniProtKB"/>
</dbReference>
<dbReference type="GO" id="GO:0005576">
    <property type="term" value="C:extracellular region"/>
    <property type="evidence" value="ECO:0007005"/>
    <property type="project" value="BHF-UCL"/>
</dbReference>
<dbReference type="GO" id="GO:0005615">
    <property type="term" value="C:extracellular space"/>
    <property type="evidence" value="ECO:0000314"/>
    <property type="project" value="UniProtKB"/>
</dbReference>
<dbReference type="GO" id="GO:0005509">
    <property type="term" value="F:calcium ion binding"/>
    <property type="evidence" value="ECO:0007669"/>
    <property type="project" value="InterPro"/>
</dbReference>
<dbReference type="GO" id="GO:0005006">
    <property type="term" value="F:epidermal growth factor receptor activity"/>
    <property type="evidence" value="ECO:0000314"/>
    <property type="project" value="UniProtKB"/>
</dbReference>
<dbReference type="GO" id="GO:0005154">
    <property type="term" value="F:epidermal growth factor receptor binding"/>
    <property type="evidence" value="ECO:0000314"/>
    <property type="project" value="UniProtKB"/>
</dbReference>
<dbReference type="GO" id="GO:0008083">
    <property type="term" value="F:growth factor activity"/>
    <property type="evidence" value="ECO:0007669"/>
    <property type="project" value="UniProtKB-KW"/>
</dbReference>
<dbReference type="GO" id="GO:0043010">
    <property type="term" value="P:camera-type eye development"/>
    <property type="evidence" value="ECO:0000270"/>
    <property type="project" value="UniProtKB"/>
</dbReference>
<dbReference type="GO" id="GO:0048048">
    <property type="term" value="P:embryonic eye morphogenesis"/>
    <property type="evidence" value="ECO:0000270"/>
    <property type="project" value="UniProtKB"/>
</dbReference>
<dbReference type="GO" id="GO:0007173">
    <property type="term" value="P:epidermal growth factor receptor signaling pathway"/>
    <property type="evidence" value="ECO:0000314"/>
    <property type="project" value="UniProtKB"/>
</dbReference>
<dbReference type="GO" id="GO:0032331">
    <property type="term" value="P:negative regulation of chondrocyte differentiation"/>
    <property type="evidence" value="ECO:0000314"/>
    <property type="project" value="UniProtKB"/>
</dbReference>
<dbReference type="GO" id="GO:0018108">
    <property type="term" value="P:peptidyl-tyrosine phosphorylation"/>
    <property type="evidence" value="ECO:0000314"/>
    <property type="project" value="UniProtKB"/>
</dbReference>
<dbReference type="GO" id="GO:0048050">
    <property type="term" value="P:post-embryonic eye morphogenesis"/>
    <property type="evidence" value="ECO:0000270"/>
    <property type="project" value="UniProtKB"/>
</dbReference>
<dbReference type="GO" id="GO:0006355">
    <property type="term" value="P:regulation of DNA-templated transcription"/>
    <property type="evidence" value="ECO:0000314"/>
    <property type="project" value="UniProtKB"/>
</dbReference>
<dbReference type="GO" id="GO:0007601">
    <property type="term" value="P:visual perception"/>
    <property type="evidence" value="ECO:0000304"/>
    <property type="project" value="ProtInc"/>
</dbReference>
<dbReference type="CDD" id="cd00054">
    <property type="entry name" value="EGF_CA"/>
    <property type="match status" value="4"/>
</dbReference>
<dbReference type="FunFam" id="2.10.25.10:FF:000323">
    <property type="entry name" value="EGF-containing fibulin-like extracellular matrix protein 1"/>
    <property type="match status" value="1"/>
</dbReference>
<dbReference type="FunFam" id="2.10.25.10:FF:000380">
    <property type="entry name" value="EGF-containing fibulin-like extracellular matrix protein 1"/>
    <property type="match status" value="1"/>
</dbReference>
<dbReference type="FunFam" id="2.10.25.10:FF:000418">
    <property type="entry name" value="EGF-containing fibulin-like extracellular matrix protein 1"/>
    <property type="match status" value="1"/>
</dbReference>
<dbReference type="FunFam" id="2.10.25.10:FF:000201">
    <property type="entry name" value="EGF-containing fibulin-like extracellular matrix protein 2"/>
    <property type="match status" value="1"/>
</dbReference>
<dbReference type="Gene3D" id="2.10.25.10">
    <property type="entry name" value="Laminin"/>
    <property type="match status" value="5"/>
</dbReference>
<dbReference type="InterPro" id="IPR026823">
    <property type="entry name" value="cEGF"/>
</dbReference>
<dbReference type="InterPro" id="IPR001881">
    <property type="entry name" value="EGF-like_Ca-bd_dom"/>
</dbReference>
<dbReference type="InterPro" id="IPR000742">
    <property type="entry name" value="EGF-like_dom"/>
</dbReference>
<dbReference type="InterPro" id="IPR000152">
    <property type="entry name" value="EGF-type_Asp/Asn_hydroxyl_site"/>
</dbReference>
<dbReference type="InterPro" id="IPR018097">
    <property type="entry name" value="EGF_Ca-bd_CS"/>
</dbReference>
<dbReference type="InterPro" id="IPR055088">
    <property type="entry name" value="Fibulin_C"/>
</dbReference>
<dbReference type="InterPro" id="IPR009030">
    <property type="entry name" value="Growth_fac_rcpt_cys_sf"/>
</dbReference>
<dbReference type="InterPro" id="IPR052235">
    <property type="entry name" value="Nephronectin_domain"/>
</dbReference>
<dbReference type="InterPro" id="IPR049883">
    <property type="entry name" value="NOTCH1_EGF-like"/>
</dbReference>
<dbReference type="PANTHER" id="PTHR24050:SF27">
    <property type="entry name" value="FIBRILLIN-1"/>
    <property type="match status" value="1"/>
</dbReference>
<dbReference type="PANTHER" id="PTHR24050">
    <property type="entry name" value="PA14 DOMAIN-CONTAINING PROTEIN"/>
    <property type="match status" value="1"/>
</dbReference>
<dbReference type="Pfam" id="PF12662">
    <property type="entry name" value="cEGF"/>
    <property type="match status" value="3"/>
</dbReference>
<dbReference type="Pfam" id="PF07645">
    <property type="entry name" value="EGF_CA"/>
    <property type="match status" value="2"/>
</dbReference>
<dbReference type="Pfam" id="PF22914">
    <property type="entry name" value="Fibulin_C"/>
    <property type="match status" value="1"/>
</dbReference>
<dbReference type="SMART" id="SM00181">
    <property type="entry name" value="EGF"/>
    <property type="match status" value="5"/>
</dbReference>
<dbReference type="SMART" id="SM00179">
    <property type="entry name" value="EGF_CA"/>
    <property type="match status" value="6"/>
</dbReference>
<dbReference type="SUPFAM" id="SSF57196">
    <property type="entry name" value="EGF/Laminin"/>
    <property type="match status" value="1"/>
</dbReference>
<dbReference type="SUPFAM" id="SSF57184">
    <property type="entry name" value="Growth factor receptor domain"/>
    <property type="match status" value="1"/>
</dbReference>
<dbReference type="PROSITE" id="PS00010">
    <property type="entry name" value="ASX_HYDROXYL"/>
    <property type="match status" value="4"/>
</dbReference>
<dbReference type="PROSITE" id="PS01186">
    <property type="entry name" value="EGF_2"/>
    <property type="match status" value="4"/>
</dbReference>
<dbReference type="PROSITE" id="PS50026">
    <property type="entry name" value="EGF_3"/>
    <property type="match status" value="4"/>
</dbReference>
<dbReference type="PROSITE" id="PS01187">
    <property type="entry name" value="EGF_CA"/>
    <property type="match status" value="6"/>
</dbReference>